<dbReference type="EC" id="5.2.1.8"/>
<dbReference type="EMBL" id="AE014291">
    <property type="protein sequence ID" value="AAN30014.1"/>
    <property type="molecule type" value="Genomic_DNA"/>
</dbReference>
<dbReference type="EMBL" id="CP002997">
    <property type="protein sequence ID" value="AEM18432.1"/>
    <property type="molecule type" value="Genomic_DNA"/>
</dbReference>
<dbReference type="RefSeq" id="WP_004683823.1">
    <property type="nucleotide sequence ID" value="NZ_KN046804.1"/>
</dbReference>
<dbReference type="SMR" id="Q8G0J9"/>
<dbReference type="KEGG" id="bms:BR1094"/>
<dbReference type="KEGG" id="bsi:BS1330_I1090"/>
<dbReference type="PATRIC" id="fig|204722.21.peg.2193"/>
<dbReference type="HOGENOM" id="CLU_012062_16_6_5"/>
<dbReference type="PhylomeDB" id="Q8G0J9"/>
<dbReference type="Proteomes" id="UP000007104">
    <property type="component" value="Chromosome I"/>
</dbReference>
<dbReference type="GO" id="GO:0042597">
    <property type="term" value="C:periplasmic space"/>
    <property type="evidence" value="ECO:0007669"/>
    <property type="project" value="UniProtKB-SubCell"/>
</dbReference>
<dbReference type="GO" id="GO:0003755">
    <property type="term" value="F:peptidyl-prolyl cis-trans isomerase activity"/>
    <property type="evidence" value="ECO:0007669"/>
    <property type="project" value="UniProtKB-KW"/>
</dbReference>
<dbReference type="GO" id="GO:0006457">
    <property type="term" value="P:protein folding"/>
    <property type="evidence" value="ECO:0007669"/>
    <property type="project" value="InterPro"/>
</dbReference>
<dbReference type="CDD" id="cd00317">
    <property type="entry name" value="cyclophilin"/>
    <property type="match status" value="1"/>
</dbReference>
<dbReference type="Gene3D" id="2.40.100.10">
    <property type="entry name" value="Cyclophilin-like"/>
    <property type="match status" value="1"/>
</dbReference>
<dbReference type="InterPro" id="IPR029000">
    <property type="entry name" value="Cyclophilin-like_dom_sf"/>
</dbReference>
<dbReference type="InterPro" id="IPR024936">
    <property type="entry name" value="Cyclophilin-type_PPIase"/>
</dbReference>
<dbReference type="InterPro" id="IPR020892">
    <property type="entry name" value="Cyclophilin-type_PPIase_CS"/>
</dbReference>
<dbReference type="InterPro" id="IPR002130">
    <property type="entry name" value="Cyclophilin-type_PPIase_dom"/>
</dbReference>
<dbReference type="InterPro" id="IPR044666">
    <property type="entry name" value="Cyclophilin_A-like"/>
</dbReference>
<dbReference type="PANTHER" id="PTHR45625">
    <property type="entry name" value="PEPTIDYL-PROLYL CIS-TRANS ISOMERASE-RELATED"/>
    <property type="match status" value="1"/>
</dbReference>
<dbReference type="PANTHER" id="PTHR45625:SF4">
    <property type="entry name" value="PEPTIDYLPROLYL ISOMERASE DOMAIN AND WD REPEAT-CONTAINING PROTEIN 1"/>
    <property type="match status" value="1"/>
</dbReference>
<dbReference type="Pfam" id="PF00160">
    <property type="entry name" value="Pro_isomerase"/>
    <property type="match status" value="1"/>
</dbReference>
<dbReference type="PIRSF" id="PIRSF001467">
    <property type="entry name" value="Peptidylpro_ismrse"/>
    <property type="match status" value="1"/>
</dbReference>
<dbReference type="PRINTS" id="PR00153">
    <property type="entry name" value="CSAPPISMRASE"/>
</dbReference>
<dbReference type="SUPFAM" id="SSF50891">
    <property type="entry name" value="Cyclophilin-like"/>
    <property type="match status" value="1"/>
</dbReference>
<dbReference type="PROSITE" id="PS00170">
    <property type="entry name" value="CSA_PPIASE_1"/>
    <property type="match status" value="1"/>
</dbReference>
<dbReference type="PROSITE" id="PS50072">
    <property type="entry name" value="CSA_PPIASE_2"/>
    <property type="match status" value="1"/>
</dbReference>
<comment type="function">
    <text evidence="1">PPIases accelerate the folding of proteins. It catalyzes the cis-trans isomerization of proline imidic peptide bonds in oligopeptides (By similarity).</text>
</comment>
<comment type="catalytic activity">
    <reaction>
        <text>[protein]-peptidylproline (omega=180) = [protein]-peptidylproline (omega=0)</text>
        <dbReference type="Rhea" id="RHEA:16237"/>
        <dbReference type="Rhea" id="RHEA-COMP:10747"/>
        <dbReference type="Rhea" id="RHEA-COMP:10748"/>
        <dbReference type="ChEBI" id="CHEBI:83833"/>
        <dbReference type="ChEBI" id="CHEBI:83834"/>
        <dbReference type="EC" id="5.2.1.8"/>
    </reaction>
</comment>
<comment type="subcellular location">
    <subcellularLocation>
        <location evidence="4">Periplasm</location>
    </subcellularLocation>
</comment>
<comment type="similarity">
    <text evidence="4">Belongs to the cyclophilin-type PPIase family.</text>
</comment>
<organism>
    <name type="scientific">Brucella suis biovar 1 (strain 1330)</name>
    <dbReference type="NCBI Taxonomy" id="204722"/>
    <lineage>
        <taxon>Bacteria</taxon>
        <taxon>Pseudomonadati</taxon>
        <taxon>Pseudomonadota</taxon>
        <taxon>Alphaproteobacteria</taxon>
        <taxon>Hyphomicrobiales</taxon>
        <taxon>Brucellaceae</taxon>
        <taxon>Brucella/Ochrobactrum group</taxon>
        <taxon>Brucella</taxon>
    </lineage>
</organism>
<sequence>MSFIRSALAAAAFVALSIGAVQTASAADPENTVILKLKDGDVALELRPDLAPKHVAQIKKLVREGAYNGVAFHRVIPGFMAQTGDVKFGNMDKGFDAARVGTGGSNYPDLPAEFSKEPFVRGTVGMARSQNPNSANSQFFIMFDDGPFLNGQYTVVGKVVSGMDAVDKIKKGSEAENGAVKNPDKIIKATIEADTK</sequence>
<keyword id="KW-0413">Isomerase</keyword>
<keyword id="KW-0574">Periplasm</keyword>
<keyword id="KW-0697">Rotamase</keyword>
<keyword id="KW-0732">Signal</keyword>
<accession>Q8G0J9</accession>
<accession>G0KA16</accession>
<gene>
    <name type="primary">ppi</name>
    <name type="ordered locus">BR1094</name>
    <name type="ordered locus">BS1330_I1090</name>
</gene>
<proteinExistence type="inferred from homology"/>
<feature type="signal peptide" evidence="2">
    <location>
        <begin position="1"/>
        <end position="26"/>
    </location>
</feature>
<feature type="chain" id="PRO_0000282596" description="Probable peptidyl-prolyl cis-trans isomerase">
    <location>
        <begin position="27"/>
        <end position="196"/>
    </location>
</feature>
<feature type="domain" description="PPIase cyclophilin-type" evidence="3">
    <location>
        <begin position="29"/>
        <end position="194"/>
    </location>
</feature>
<reference key="1">
    <citation type="journal article" date="2002" name="Proc. Natl. Acad. Sci. U.S.A.">
        <title>The Brucella suis genome reveals fundamental similarities between animal and plant pathogens and symbionts.</title>
        <authorList>
            <person name="Paulsen I.T."/>
            <person name="Seshadri R."/>
            <person name="Nelson K.E."/>
            <person name="Eisen J.A."/>
            <person name="Heidelberg J.F."/>
            <person name="Read T.D."/>
            <person name="Dodson R.J."/>
            <person name="Umayam L.A."/>
            <person name="Brinkac L.M."/>
            <person name="Beanan M.J."/>
            <person name="Daugherty S.C."/>
            <person name="DeBoy R.T."/>
            <person name="Durkin A.S."/>
            <person name="Kolonay J.F."/>
            <person name="Madupu R."/>
            <person name="Nelson W.C."/>
            <person name="Ayodeji B."/>
            <person name="Kraul M."/>
            <person name="Shetty J."/>
            <person name="Malek J.A."/>
            <person name="Van Aken S.E."/>
            <person name="Riedmuller S."/>
            <person name="Tettelin H."/>
            <person name="Gill S.R."/>
            <person name="White O."/>
            <person name="Salzberg S.L."/>
            <person name="Hoover D.L."/>
            <person name="Lindler L.E."/>
            <person name="Halling S.M."/>
            <person name="Boyle S.M."/>
            <person name="Fraser C.M."/>
        </authorList>
    </citation>
    <scope>NUCLEOTIDE SEQUENCE [LARGE SCALE GENOMIC DNA]</scope>
    <source>
        <strain>1330</strain>
    </source>
</reference>
<reference key="2">
    <citation type="journal article" date="2011" name="J. Bacteriol.">
        <title>Revised genome sequence of Brucella suis 1330.</title>
        <authorList>
            <person name="Tae H."/>
            <person name="Shallom S."/>
            <person name="Settlage R."/>
            <person name="Preston D."/>
            <person name="Adams L.G."/>
            <person name="Garner H.R."/>
        </authorList>
    </citation>
    <scope>NUCLEOTIDE SEQUENCE [LARGE SCALE GENOMIC DNA]</scope>
    <source>
        <strain>1330</strain>
    </source>
</reference>
<evidence type="ECO:0000250" key="1"/>
<evidence type="ECO:0000255" key="2"/>
<evidence type="ECO:0000255" key="3">
    <source>
        <dbReference type="PROSITE-ProRule" id="PRU00156"/>
    </source>
</evidence>
<evidence type="ECO:0000305" key="4"/>
<protein>
    <recommendedName>
        <fullName>Probable peptidyl-prolyl cis-trans isomerase</fullName>
        <shortName>PPIase</shortName>
        <ecNumber>5.2.1.8</ecNumber>
    </recommendedName>
    <alternativeName>
        <fullName>Rotamase</fullName>
    </alternativeName>
</protein>
<name>PPI1_BRUSU</name>